<reference key="1">
    <citation type="submission" date="2007-03" db="EMBL/GenBank/DDBJ databases">
        <authorList>
            <person name="Heidelberg J."/>
        </authorList>
    </citation>
    <scope>NUCLEOTIDE SEQUENCE [LARGE SCALE GENOMIC DNA]</scope>
    <source>
        <strain>ATCC 39541 / Classical Ogawa 395 / O395</strain>
    </source>
</reference>
<reference key="2">
    <citation type="journal article" date="2008" name="PLoS ONE">
        <title>A recalibrated molecular clock and independent origins for the cholera pandemic clones.</title>
        <authorList>
            <person name="Feng L."/>
            <person name="Reeves P.R."/>
            <person name="Lan R."/>
            <person name="Ren Y."/>
            <person name="Gao C."/>
            <person name="Zhou Z."/>
            <person name="Ren Y."/>
            <person name="Cheng J."/>
            <person name="Wang W."/>
            <person name="Wang J."/>
            <person name="Qian W."/>
            <person name="Li D."/>
            <person name="Wang L."/>
        </authorList>
    </citation>
    <scope>NUCLEOTIDE SEQUENCE [LARGE SCALE GENOMIC DNA]</scope>
    <source>
        <strain>ATCC 39541 / Classical Ogawa 395 / O395</strain>
    </source>
</reference>
<sequence>MARYLGPKLKLSRREGTDLFLKSGVRAIDTKCKIDNAPGVHGARRGRLSEYGVQLREKQKVRRIYGVLEKQFRNYYKEAARLKGNTGENLLQLLEGRLDNVVYRMGFGATRAEARQLVSHKAILVNGKVVNVPSFNVAANDVVAVREKAKKQSRIKAALEVAEQREKPTWIEVDVNTMEGTFKRMPERSDLSADINEQLIVELYSK</sequence>
<dbReference type="EMBL" id="CP000627">
    <property type="protein sequence ID" value="ABQ21698.1"/>
    <property type="molecule type" value="Genomic_DNA"/>
</dbReference>
<dbReference type="EMBL" id="CP001235">
    <property type="protein sequence ID" value="ACP10671.1"/>
    <property type="molecule type" value="Genomic_DNA"/>
</dbReference>
<dbReference type="RefSeq" id="WP_000135216.1">
    <property type="nucleotide sequence ID" value="NZ_JAACZH010000007.1"/>
</dbReference>
<dbReference type="SMR" id="A5F573"/>
<dbReference type="GeneID" id="88785131"/>
<dbReference type="KEGG" id="vco:VC0395_A2150"/>
<dbReference type="KEGG" id="vcr:VC395_2685"/>
<dbReference type="PATRIC" id="fig|345073.21.peg.2585"/>
<dbReference type="eggNOG" id="COG0522">
    <property type="taxonomic scope" value="Bacteria"/>
</dbReference>
<dbReference type="HOGENOM" id="CLU_092403_0_2_6"/>
<dbReference type="OrthoDB" id="9803672at2"/>
<dbReference type="Proteomes" id="UP000000249">
    <property type="component" value="Chromosome 2"/>
</dbReference>
<dbReference type="GO" id="GO:0015935">
    <property type="term" value="C:small ribosomal subunit"/>
    <property type="evidence" value="ECO:0007669"/>
    <property type="project" value="InterPro"/>
</dbReference>
<dbReference type="GO" id="GO:0019843">
    <property type="term" value="F:rRNA binding"/>
    <property type="evidence" value="ECO:0007669"/>
    <property type="project" value="UniProtKB-UniRule"/>
</dbReference>
<dbReference type="GO" id="GO:0003735">
    <property type="term" value="F:structural constituent of ribosome"/>
    <property type="evidence" value="ECO:0007669"/>
    <property type="project" value="InterPro"/>
</dbReference>
<dbReference type="GO" id="GO:0042274">
    <property type="term" value="P:ribosomal small subunit biogenesis"/>
    <property type="evidence" value="ECO:0007669"/>
    <property type="project" value="TreeGrafter"/>
</dbReference>
<dbReference type="GO" id="GO:0006412">
    <property type="term" value="P:translation"/>
    <property type="evidence" value="ECO:0007669"/>
    <property type="project" value="UniProtKB-UniRule"/>
</dbReference>
<dbReference type="CDD" id="cd00165">
    <property type="entry name" value="S4"/>
    <property type="match status" value="1"/>
</dbReference>
<dbReference type="FunFam" id="1.10.1050.10:FF:000001">
    <property type="entry name" value="30S ribosomal protein S4"/>
    <property type="match status" value="1"/>
</dbReference>
<dbReference type="FunFam" id="3.10.290.10:FF:000001">
    <property type="entry name" value="30S ribosomal protein S4"/>
    <property type="match status" value="1"/>
</dbReference>
<dbReference type="Gene3D" id="1.10.1050.10">
    <property type="entry name" value="Ribosomal Protein S4 Delta 41, Chain A, domain 1"/>
    <property type="match status" value="1"/>
</dbReference>
<dbReference type="Gene3D" id="3.10.290.10">
    <property type="entry name" value="RNA-binding S4 domain"/>
    <property type="match status" value="1"/>
</dbReference>
<dbReference type="HAMAP" id="MF_01306_B">
    <property type="entry name" value="Ribosomal_uS4_B"/>
    <property type="match status" value="1"/>
</dbReference>
<dbReference type="InterPro" id="IPR022801">
    <property type="entry name" value="Ribosomal_uS4"/>
</dbReference>
<dbReference type="InterPro" id="IPR005709">
    <property type="entry name" value="Ribosomal_uS4_bac-type"/>
</dbReference>
<dbReference type="InterPro" id="IPR018079">
    <property type="entry name" value="Ribosomal_uS4_CS"/>
</dbReference>
<dbReference type="InterPro" id="IPR001912">
    <property type="entry name" value="Ribosomal_uS4_N"/>
</dbReference>
<dbReference type="InterPro" id="IPR002942">
    <property type="entry name" value="S4_RNA-bd"/>
</dbReference>
<dbReference type="InterPro" id="IPR036986">
    <property type="entry name" value="S4_RNA-bd_sf"/>
</dbReference>
<dbReference type="NCBIfam" id="NF003717">
    <property type="entry name" value="PRK05327.1"/>
    <property type="match status" value="1"/>
</dbReference>
<dbReference type="NCBIfam" id="TIGR01017">
    <property type="entry name" value="rpsD_bact"/>
    <property type="match status" value="1"/>
</dbReference>
<dbReference type="PANTHER" id="PTHR11831">
    <property type="entry name" value="30S 40S RIBOSOMAL PROTEIN"/>
    <property type="match status" value="1"/>
</dbReference>
<dbReference type="PANTHER" id="PTHR11831:SF4">
    <property type="entry name" value="SMALL RIBOSOMAL SUBUNIT PROTEIN US4M"/>
    <property type="match status" value="1"/>
</dbReference>
<dbReference type="Pfam" id="PF00163">
    <property type="entry name" value="Ribosomal_S4"/>
    <property type="match status" value="1"/>
</dbReference>
<dbReference type="Pfam" id="PF01479">
    <property type="entry name" value="S4"/>
    <property type="match status" value="1"/>
</dbReference>
<dbReference type="SMART" id="SM01390">
    <property type="entry name" value="Ribosomal_S4"/>
    <property type="match status" value="1"/>
</dbReference>
<dbReference type="SMART" id="SM00363">
    <property type="entry name" value="S4"/>
    <property type="match status" value="1"/>
</dbReference>
<dbReference type="SUPFAM" id="SSF55174">
    <property type="entry name" value="Alpha-L RNA-binding motif"/>
    <property type="match status" value="1"/>
</dbReference>
<dbReference type="PROSITE" id="PS00632">
    <property type="entry name" value="RIBOSOMAL_S4"/>
    <property type="match status" value="1"/>
</dbReference>
<dbReference type="PROSITE" id="PS50889">
    <property type="entry name" value="S4"/>
    <property type="match status" value="1"/>
</dbReference>
<accession>A5F573</accession>
<accession>C3LXH1</accession>
<organism>
    <name type="scientific">Vibrio cholerae serotype O1 (strain ATCC 39541 / Classical Ogawa 395 / O395)</name>
    <dbReference type="NCBI Taxonomy" id="345073"/>
    <lineage>
        <taxon>Bacteria</taxon>
        <taxon>Pseudomonadati</taxon>
        <taxon>Pseudomonadota</taxon>
        <taxon>Gammaproteobacteria</taxon>
        <taxon>Vibrionales</taxon>
        <taxon>Vibrionaceae</taxon>
        <taxon>Vibrio</taxon>
    </lineage>
</organism>
<name>RS4_VIBC3</name>
<proteinExistence type="inferred from homology"/>
<evidence type="ECO:0000255" key="1">
    <source>
        <dbReference type="HAMAP-Rule" id="MF_01306"/>
    </source>
</evidence>
<evidence type="ECO:0000305" key="2"/>
<protein>
    <recommendedName>
        <fullName evidence="1">Small ribosomal subunit protein uS4</fullName>
    </recommendedName>
    <alternativeName>
        <fullName evidence="2">30S ribosomal protein S4</fullName>
    </alternativeName>
</protein>
<comment type="function">
    <text evidence="1">One of the primary rRNA binding proteins, it binds directly to 16S rRNA where it nucleates assembly of the body of the 30S subunit.</text>
</comment>
<comment type="function">
    <text evidence="1">With S5 and S12 plays an important role in translational accuracy.</text>
</comment>
<comment type="subunit">
    <text evidence="1">Part of the 30S ribosomal subunit. Contacts protein S5. The interaction surface between S4 and S5 is involved in control of translational fidelity.</text>
</comment>
<comment type="similarity">
    <text evidence="1">Belongs to the universal ribosomal protein uS4 family.</text>
</comment>
<keyword id="KW-0687">Ribonucleoprotein</keyword>
<keyword id="KW-0689">Ribosomal protein</keyword>
<keyword id="KW-0694">RNA-binding</keyword>
<keyword id="KW-0699">rRNA-binding</keyword>
<feature type="chain" id="PRO_0000322350" description="Small ribosomal subunit protein uS4">
    <location>
        <begin position="1"/>
        <end position="206"/>
    </location>
</feature>
<feature type="domain" description="S4 RNA-binding" evidence="1">
    <location>
        <begin position="96"/>
        <end position="158"/>
    </location>
</feature>
<gene>
    <name evidence="1" type="primary">rpsD</name>
    <name type="ordered locus">VC0395_A2150</name>
    <name type="ordered locus">VC395_2685</name>
</gene>